<dbReference type="EC" id="1.1.1.42" evidence="1"/>
<dbReference type="EMBL" id="U62799">
    <property type="protein sequence ID" value="AAC44826.1"/>
    <property type="molecule type" value="Genomic_DNA"/>
</dbReference>
<dbReference type="EMBL" id="AE014133">
    <property type="protein sequence ID" value="AAN58406.1"/>
    <property type="molecule type" value="Genomic_DNA"/>
</dbReference>
<dbReference type="EMBL" id="U48886">
    <property type="protein sequence ID" value="AAC44503.1"/>
    <property type="molecule type" value="Genomic_DNA"/>
</dbReference>
<dbReference type="RefSeq" id="NP_721100.1">
    <property type="nucleotide sequence ID" value="NC_004350.2"/>
</dbReference>
<dbReference type="RefSeq" id="WP_002261869.1">
    <property type="nucleotide sequence ID" value="NC_004350.2"/>
</dbReference>
<dbReference type="SMR" id="Q59940"/>
<dbReference type="STRING" id="210007.SMU_672"/>
<dbReference type="KEGG" id="smu:SMU_672"/>
<dbReference type="PATRIC" id="fig|210007.7.peg.597"/>
<dbReference type="eggNOG" id="COG0538">
    <property type="taxonomic scope" value="Bacteria"/>
</dbReference>
<dbReference type="HOGENOM" id="CLU_031953_7_1_9"/>
<dbReference type="OrthoDB" id="9806254at2"/>
<dbReference type="PhylomeDB" id="Q59940"/>
<dbReference type="Proteomes" id="UP000002512">
    <property type="component" value="Chromosome"/>
</dbReference>
<dbReference type="GO" id="GO:0004450">
    <property type="term" value="F:isocitrate dehydrogenase (NADP+) activity"/>
    <property type="evidence" value="ECO:0007669"/>
    <property type="project" value="UniProtKB-EC"/>
</dbReference>
<dbReference type="GO" id="GO:0000287">
    <property type="term" value="F:magnesium ion binding"/>
    <property type="evidence" value="ECO:0007669"/>
    <property type="project" value="InterPro"/>
</dbReference>
<dbReference type="GO" id="GO:0051287">
    <property type="term" value="F:NAD binding"/>
    <property type="evidence" value="ECO:0007669"/>
    <property type="project" value="InterPro"/>
</dbReference>
<dbReference type="GO" id="GO:0006097">
    <property type="term" value="P:glyoxylate cycle"/>
    <property type="evidence" value="ECO:0007669"/>
    <property type="project" value="UniProtKB-KW"/>
</dbReference>
<dbReference type="GO" id="GO:0006099">
    <property type="term" value="P:tricarboxylic acid cycle"/>
    <property type="evidence" value="ECO:0007669"/>
    <property type="project" value="UniProtKB-KW"/>
</dbReference>
<dbReference type="Gene3D" id="3.40.718.10">
    <property type="entry name" value="Isopropylmalate Dehydrogenase"/>
    <property type="match status" value="1"/>
</dbReference>
<dbReference type="InterPro" id="IPR019818">
    <property type="entry name" value="IsoCit/isopropylmalate_DH_CS"/>
</dbReference>
<dbReference type="InterPro" id="IPR004439">
    <property type="entry name" value="Isocitrate_DH_NADP_dimer_prok"/>
</dbReference>
<dbReference type="InterPro" id="IPR024084">
    <property type="entry name" value="IsoPropMal-DH-like_dom"/>
</dbReference>
<dbReference type="NCBIfam" id="NF005425">
    <property type="entry name" value="PRK07006.1"/>
    <property type="match status" value="1"/>
</dbReference>
<dbReference type="NCBIfam" id="TIGR00183">
    <property type="entry name" value="prok_nadp_idh"/>
    <property type="match status" value="1"/>
</dbReference>
<dbReference type="PANTHER" id="PTHR43504">
    <property type="entry name" value="ISOCITRATE DEHYDROGENASE [NADP]"/>
    <property type="match status" value="1"/>
</dbReference>
<dbReference type="PANTHER" id="PTHR43504:SF1">
    <property type="entry name" value="ISOCITRATE DEHYDROGENASE [NADP]"/>
    <property type="match status" value="1"/>
</dbReference>
<dbReference type="Pfam" id="PF00180">
    <property type="entry name" value="Iso_dh"/>
    <property type="match status" value="1"/>
</dbReference>
<dbReference type="SMART" id="SM01329">
    <property type="entry name" value="Iso_dh"/>
    <property type="match status" value="1"/>
</dbReference>
<dbReference type="SUPFAM" id="SSF53659">
    <property type="entry name" value="Isocitrate/Isopropylmalate dehydrogenase-like"/>
    <property type="match status" value="1"/>
</dbReference>
<dbReference type="PROSITE" id="PS00470">
    <property type="entry name" value="IDH_IMDH"/>
    <property type="match status" value="1"/>
</dbReference>
<keyword id="KW-0329">Glyoxylate bypass</keyword>
<keyword id="KW-0460">Magnesium</keyword>
<keyword id="KW-0464">Manganese</keyword>
<keyword id="KW-0479">Metal-binding</keyword>
<keyword id="KW-0521">NADP</keyword>
<keyword id="KW-0560">Oxidoreductase</keyword>
<keyword id="KW-1185">Reference proteome</keyword>
<keyword id="KW-0816">Tricarboxylic acid cycle</keyword>
<proteinExistence type="inferred from homology"/>
<protein>
    <recommendedName>
        <fullName>Isocitrate dehydrogenase [NADP]</fullName>
        <shortName>IDH</shortName>
        <ecNumber evidence="1">1.1.1.42</ecNumber>
    </recommendedName>
    <alternativeName>
        <fullName>IDP</fullName>
    </alternativeName>
    <alternativeName>
        <fullName>NADP(+)-specific ICDH</fullName>
    </alternativeName>
    <alternativeName>
        <fullName>Oxalosuccinate decarboxylase</fullName>
    </alternativeName>
</protein>
<sequence>MAEKVSFEEGKLQVPDKPVIPYIEGDGVGQDIWKNAQIVFDKAIAKVYGGHKQVIWREVLAGKKAYNETGNWLPNETLEIIKTHLLAIKGPLETPVGGGIRSLNVALRQELDLFACVRPVRYFKGVPSPLKHPEKTAITIFRENTEDIYAGIEWNAGTAEVQKVINFLQDDMQVKKIRFPKSSSIGIKPISIEGSQRLIRAAIEYALANNLTKVTLVHKGNIQKFTEGGFRKWGYELAKREYAAELASGQLVVDDIIADNFLQQILLKPERFDVVALTNLNGDYASDALAAQVGGIGISPGANINYQTGHAIFEATHGTAPDIAGQDLANPSSVLLSGCMLFDYIGWSKVSDLIMKAVEKAIANGQVTIDFAKELGVEALTTRQFSEVLLTYL</sequence>
<name>IDH_STRMU</name>
<accession>Q59940</accession>
<accession>Q59927</accession>
<reference key="1">
    <citation type="submission" date="1996-07" db="EMBL/GenBank/DDBJ databases">
        <authorList>
            <person name="Cvitkovitch D.G."/>
            <person name="Gutierrez J.A."/>
            <person name="Bleiweis A.S."/>
        </authorList>
    </citation>
    <scope>NUCLEOTIDE SEQUENCE [GENOMIC DNA]</scope>
    <source>
        <strain>JH1005</strain>
    </source>
</reference>
<reference key="2">
    <citation type="journal article" date="2002" name="Proc. Natl. Acad. Sci. U.S.A.">
        <title>Genome sequence of Streptococcus mutans UA159, a cariogenic dental pathogen.</title>
        <authorList>
            <person name="Ajdic D.J."/>
            <person name="McShan W.M."/>
            <person name="McLaughlin R.E."/>
            <person name="Savic G."/>
            <person name="Chang J."/>
            <person name="Carson M.B."/>
            <person name="Primeaux C."/>
            <person name="Tian R."/>
            <person name="Kenton S."/>
            <person name="Jia H.G."/>
            <person name="Lin S.P."/>
            <person name="Qian Y."/>
            <person name="Li S."/>
            <person name="Zhu H."/>
            <person name="Najar F.Z."/>
            <person name="Lai H."/>
            <person name="White J."/>
            <person name="Roe B.A."/>
            <person name="Ferretti J.J."/>
        </authorList>
    </citation>
    <scope>NUCLEOTIDE SEQUENCE [LARGE SCALE GENOMIC DNA]</scope>
    <source>
        <strain>ATCC 700610 / UA159</strain>
    </source>
</reference>
<reference key="3">
    <citation type="submission" date="1996-03" db="EMBL/GenBank/DDBJ databases">
        <authorList>
            <person name="Gutierrez J.A."/>
            <person name="Crowley P.J."/>
            <person name="Brown D.P."/>
            <person name="Hillman J.D."/>
            <person name="Youngman P."/>
            <person name="Bleiweis A.S."/>
        </authorList>
    </citation>
    <scope>NUCLEOTIDE SEQUENCE [GENOMIC DNA] OF 66-224</scope>
    <source>
        <strain>JH1005</strain>
    </source>
</reference>
<gene>
    <name type="primary">icd</name>
    <name type="synonym">idh</name>
    <name type="ordered locus">SMU_672</name>
</gene>
<feature type="chain" id="PRO_0000083568" description="Isocitrate dehydrogenase [NADP]">
    <location>
        <begin position="1"/>
        <end position="393"/>
    </location>
</feature>
<feature type="binding site" evidence="1">
    <location>
        <position position="102"/>
    </location>
    <ligand>
        <name>D-threo-isocitrate</name>
        <dbReference type="ChEBI" id="CHEBI:15562"/>
    </ligand>
</feature>
<feature type="binding site" evidence="1">
    <location>
        <position position="104"/>
    </location>
    <ligand>
        <name>D-threo-isocitrate</name>
        <dbReference type="ChEBI" id="CHEBI:15562"/>
    </ligand>
</feature>
<feature type="binding site" evidence="1">
    <location>
        <position position="108"/>
    </location>
    <ligand>
        <name>D-threo-isocitrate</name>
        <dbReference type="ChEBI" id="CHEBI:15562"/>
    </ligand>
</feature>
<feature type="binding site" evidence="1">
    <location>
        <position position="118"/>
    </location>
    <ligand>
        <name>D-threo-isocitrate</name>
        <dbReference type="ChEBI" id="CHEBI:15562"/>
    </ligand>
</feature>
<feature type="binding site" evidence="1">
    <location>
        <position position="142"/>
    </location>
    <ligand>
        <name>D-threo-isocitrate</name>
        <dbReference type="ChEBI" id="CHEBI:15562"/>
    </ligand>
</feature>
<feature type="binding site" evidence="1">
    <location>
        <position position="283"/>
    </location>
    <ligand>
        <name>Mg(2+)</name>
        <dbReference type="ChEBI" id="CHEBI:18420"/>
    </ligand>
</feature>
<feature type="site" description="Critical for catalysis" evidence="1">
    <location>
        <position position="149"/>
    </location>
</feature>
<feature type="site" description="Critical for catalysis" evidence="1">
    <location>
        <position position="219"/>
    </location>
</feature>
<feature type="sequence conflict" description="In Ref. 1; AAC44826." evidence="2" ref="1">
    <original>N</original>
    <variation>K</variation>
    <location>
        <position position="67"/>
    </location>
</feature>
<feature type="sequence conflict" description="In Ref. 1; AAC44826." evidence="2" ref="1">
    <original>R</original>
    <variation>C</variation>
    <location>
        <position position="383"/>
    </location>
</feature>
<comment type="function">
    <text evidence="1">Catalyzes the oxidative decarboxylation of isocitrate to 2-oxoglutarate and carbon dioxide with the concomitant reduction of NADP(+).</text>
</comment>
<comment type="catalytic activity">
    <reaction evidence="1">
        <text>D-threo-isocitrate + NADP(+) = 2-oxoglutarate + CO2 + NADPH</text>
        <dbReference type="Rhea" id="RHEA:19629"/>
        <dbReference type="ChEBI" id="CHEBI:15562"/>
        <dbReference type="ChEBI" id="CHEBI:16526"/>
        <dbReference type="ChEBI" id="CHEBI:16810"/>
        <dbReference type="ChEBI" id="CHEBI:57783"/>
        <dbReference type="ChEBI" id="CHEBI:58349"/>
        <dbReference type="EC" id="1.1.1.42"/>
    </reaction>
</comment>
<comment type="cofactor">
    <cofactor evidence="1">
        <name>Mg(2+)</name>
        <dbReference type="ChEBI" id="CHEBI:18420"/>
    </cofactor>
    <cofactor evidence="1">
        <name>Mn(2+)</name>
        <dbReference type="ChEBI" id="CHEBI:29035"/>
    </cofactor>
    <text evidence="1">Binds 1 Mg(2+) or Mn(2+) ion per subunit.</text>
</comment>
<comment type="subunit">
    <text evidence="1">Homodimer.</text>
</comment>
<comment type="similarity">
    <text evidence="2">Belongs to the isocitrate and isopropylmalate dehydrogenases family.</text>
</comment>
<organism>
    <name type="scientific">Streptococcus mutans serotype c (strain ATCC 700610 / UA159)</name>
    <dbReference type="NCBI Taxonomy" id="210007"/>
    <lineage>
        <taxon>Bacteria</taxon>
        <taxon>Bacillati</taxon>
        <taxon>Bacillota</taxon>
        <taxon>Bacilli</taxon>
        <taxon>Lactobacillales</taxon>
        <taxon>Streptococcaceae</taxon>
        <taxon>Streptococcus</taxon>
    </lineage>
</organism>
<evidence type="ECO:0000250" key="1">
    <source>
        <dbReference type="UniProtKB" id="P08200"/>
    </source>
</evidence>
<evidence type="ECO:0000305" key="2"/>